<name>PP386_ARATH</name>
<gene>
    <name type="primary">PCMP-H91</name>
    <name type="ordered locus">At5g15340</name>
    <name type="ORF">F8M21_230</name>
</gene>
<sequence>MKCLSYQKVRLLLRHCAHRSFLRPGKELHAVLTTSGLKKAPRSYLSNALFQFYASSGEMVTAQKLFDEIPLSEKDNVDWTTLLSSFSRYGLLVNSMKLFVEMRRKRVEIDDVSVVCLFGVCAKLEDLGFAQQGHGVAVKMGVLTSVKVCNALMDMYGKCGLVSEVKRIFEELEEKSVVSWTVVLDTVVKWEGLERGREVFHEMPERNAVAWTVMVAGYLGAGFTREVLELLAEMVFRCGHGLNFVTLCSMLSACAQSGNLVVGRWVHVYALKKEMMMGEEASYDDVMVGTALVDMYAKCGNIDSSMNVFRLMRKRNVVTWNALFSGLAMHGKGRMVIDMFPQMIREVKPDDLTFTAVLSACSHSGIVDEGWRCFHSLRFYGLEPKVDHYACMVDLLGRAGLIEEAEILMREMPVPPNEVVLGSLLGSCSVHGKVEIAERIKRELIQMSPGNTEYQILMSNMYVAEGRSDIADGLRGSLRKRGIRKIPGLSSIYVNDSVHRFSSGDRSHPRTKEIYLKLNEVIERIRSAGYVPDVSGLVSHSEGDLEEKEQALCCHSEKLAVCFGLLETKPSTPLLVFKNLRICRDCHSAMKIVSKVYDREIIIRDRNRFHQFKGGSCSCSDYW</sequence>
<evidence type="ECO:0000255" key="1"/>
<evidence type="ECO:0000305" key="2"/>
<reference key="1">
    <citation type="journal article" date="2000" name="Nature">
        <title>Sequence and analysis of chromosome 5 of the plant Arabidopsis thaliana.</title>
        <authorList>
            <person name="Tabata S."/>
            <person name="Kaneko T."/>
            <person name="Nakamura Y."/>
            <person name="Kotani H."/>
            <person name="Kato T."/>
            <person name="Asamizu E."/>
            <person name="Miyajima N."/>
            <person name="Sasamoto S."/>
            <person name="Kimura T."/>
            <person name="Hosouchi T."/>
            <person name="Kawashima K."/>
            <person name="Kohara M."/>
            <person name="Matsumoto M."/>
            <person name="Matsuno A."/>
            <person name="Muraki A."/>
            <person name="Nakayama S."/>
            <person name="Nakazaki N."/>
            <person name="Naruo K."/>
            <person name="Okumura S."/>
            <person name="Shinpo S."/>
            <person name="Takeuchi C."/>
            <person name="Wada T."/>
            <person name="Watanabe A."/>
            <person name="Yamada M."/>
            <person name="Yasuda M."/>
            <person name="Sato S."/>
            <person name="de la Bastide M."/>
            <person name="Huang E."/>
            <person name="Spiegel L."/>
            <person name="Gnoj L."/>
            <person name="O'Shaughnessy A."/>
            <person name="Preston R."/>
            <person name="Habermann K."/>
            <person name="Murray J."/>
            <person name="Johnson D."/>
            <person name="Rohlfing T."/>
            <person name="Nelson J."/>
            <person name="Stoneking T."/>
            <person name="Pepin K."/>
            <person name="Spieth J."/>
            <person name="Sekhon M."/>
            <person name="Armstrong J."/>
            <person name="Becker M."/>
            <person name="Belter E."/>
            <person name="Cordum H."/>
            <person name="Cordes M."/>
            <person name="Courtney L."/>
            <person name="Courtney W."/>
            <person name="Dante M."/>
            <person name="Du H."/>
            <person name="Edwards J."/>
            <person name="Fryman J."/>
            <person name="Haakensen B."/>
            <person name="Lamar E."/>
            <person name="Latreille P."/>
            <person name="Leonard S."/>
            <person name="Meyer R."/>
            <person name="Mulvaney E."/>
            <person name="Ozersky P."/>
            <person name="Riley A."/>
            <person name="Strowmatt C."/>
            <person name="Wagner-McPherson C."/>
            <person name="Wollam A."/>
            <person name="Yoakum M."/>
            <person name="Bell M."/>
            <person name="Dedhia N."/>
            <person name="Parnell L."/>
            <person name="Shah R."/>
            <person name="Rodriguez M."/>
            <person name="Hoon See L."/>
            <person name="Vil D."/>
            <person name="Baker J."/>
            <person name="Kirchoff K."/>
            <person name="Toth K."/>
            <person name="King L."/>
            <person name="Bahret A."/>
            <person name="Miller B."/>
            <person name="Marra M.A."/>
            <person name="Martienssen R."/>
            <person name="McCombie W.R."/>
            <person name="Wilson R.K."/>
            <person name="Murphy G."/>
            <person name="Bancroft I."/>
            <person name="Volckaert G."/>
            <person name="Wambutt R."/>
            <person name="Duesterhoeft A."/>
            <person name="Stiekema W."/>
            <person name="Pohl T."/>
            <person name="Entian K.-D."/>
            <person name="Terryn N."/>
            <person name="Hartley N."/>
            <person name="Bent E."/>
            <person name="Johnson S."/>
            <person name="Langham S.-A."/>
            <person name="McCullagh B."/>
            <person name="Robben J."/>
            <person name="Grymonprez B."/>
            <person name="Zimmermann W."/>
            <person name="Ramsperger U."/>
            <person name="Wedler H."/>
            <person name="Balke K."/>
            <person name="Wedler E."/>
            <person name="Peters S."/>
            <person name="van Staveren M."/>
            <person name="Dirkse W."/>
            <person name="Mooijman P."/>
            <person name="Klein Lankhorst R."/>
            <person name="Weitzenegger T."/>
            <person name="Bothe G."/>
            <person name="Rose M."/>
            <person name="Hauf J."/>
            <person name="Berneiser S."/>
            <person name="Hempel S."/>
            <person name="Feldpausch M."/>
            <person name="Lamberth S."/>
            <person name="Villarroel R."/>
            <person name="Gielen J."/>
            <person name="Ardiles W."/>
            <person name="Bents O."/>
            <person name="Lemcke K."/>
            <person name="Kolesov G."/>
            <person name="Mayer K.F.X."/>
            <person name="Rudd S."/>
            <person name="Schoof H."/>
            <person name="Schueller C."/>
            <person name="Zaccaria P."/>
            <person name="Mewes H.-W."/>
            <person name="Bevan M."/>
            <person name="Fransz P.F."/>
        </authorList>
    </citation>
    <scope>NUCLEOTIDE SEQUENCE [LARGE SCALE GENOMIC DNA]</scope>
    <source>
        <strain>cv. Columbia</strain>
    </source>
</reference>
<reference key="2">
    <citation type="journal article" date="2017" name="Plant J.">
        <title>Araport11: a complete reannotation of the Arabidopsis thaliana reference genome.</title>
        <authorList>
            <person name="Cheng C.Y."/>
            <person name="Krishnakumar V."/>
            <person name="Chan A.P."/>
            <person name="Thibaud-Nissen F."/>
            <person name="Schobel S."/>
            <person name="Town C.D."/>
        </authorList>
    </citation>
    <scope>GENOME REANNOTATION</scope>
    <source>
        <strain>cv. Columbia</strain>
    </source>
</reference>
<reference key="3">
    <citation type="journal article" date="2004" name="Plant Cell">
        <title>Genome-wide analysis of Arabidopsis pentatricopeptide repeat proteins reveals their essential role in organelle biogenesis.</title>
        <authorList>
            <person name="Lurin C."/>
            <person name="Andres C."/>
            <person name="Aubourg S."/>
            <person name="Bellaoui M."/>
            <person name="Bitton F."/>
            <person name="Bruyere C."/>
            <person name="Caboche M."/>
            <person name="Debast C."/>
            <person name="Gualberto J."/>
            <person name="Hoffmann B."/>
            <person name="Lecharny A."/>
            <person name="Le Ret M."/>
            <person name="Martin-Magniette M.-L."/>
            <person name="Mireau H."/>
            <person name="Peeters N."/>
            <person name="Renou J.-P."/>
            <person name="Szurek B."/>
            <person name="Taconnat L."/>
            <person name="Small I."/>
        </authorList>
    </citation>
    <scope>GENE FAMILY</scope>
</reference>
<organism>
    <name type="scientific">Arabidopsis thaliana</name>
    <name type="common">Mouse-ear cress</name>
    <dbReference type="NCBI Taxonomy" id="3702"/>
    <lineage>
        <taxon>Eukaryota</taxon>
        <taxon>Viridiplantae</taxon>
        <taxon>Streptophyta</taxon>
        <taxon>Embryophyta</taxon>
        <taxon>Tracheophyta</taxon>
        <taxon>Spermatophyta</taxon>
        <taxon>Magnoliopsida</taxon>
        <taxon>eudicotyledons</taxon>
        <taxon>Gunneridae</taxon>
        <taxon>Pentapetalae</taxon>
        <taxon>rosids</taxon>
        <taxon>malvids</taxon>
        <taxon>Brassicales</taxon>
        <taxon>Brassicaceae</taxon>
        <taxon>Camelineae</taxon>
        <taxon>Arabidopsis</taxon>
    </lineage>
</organism>
<feature type="transit peptide" description="Mitochondrion" evidence="1">
    <location>
        <begin position="1"/>
        <end position="16"/>
    </location>
</feature>
<feature type="chain" id="PRO_0000363523" description="Pentatricopeptide repeat-containing protein At5g15340, mitochondrial">
    <location>
        <begin position="17"/>
        <end position="623"/>
    </location>
</feature>
<feature type="repeat" description="PPR 1">
    <location>
        <begin position="42"/>
        <end position="72"/>
    </location>
</feature>
<feature type="repeat" description="PPR 2">
    <location>
        <begin position="75"/>
        <end position="109"/>
    </location>
</feature>
<feature type="repeat" description="PPR 3">
    <location>
        <begin position="110"/>
        <end position="144"/>
    </location>
</feature>
<feature type="repeat" description="PPR 4">
    <location>
        <begin position="145"/>
        <end position="179"/>
    </location>
</feature>
<feature type="repeat" description="PPR 5">
    <location>
        <begin position="180"/>
        <end position="206"/>
    </location>
</feature>
<feature type="repeat" description="PPR 6">
    <location>
        <begin position="207"/>
        <end position="237"/>
    </location>
</feature>
<feature type="repeat" description="PPR 7">
    <location>
        <begin position="243"/>
        <end position="277"/>
    </location>
</feature>
<feature type="repeat" description="PPR 8">
    <location>
        <begin position="285"/>
        <end position="319"/>
    </location>
</feature>
<feature type="repeat" description="PPR 9">
    <location>
        <begin position="320"/>
        <end position="346"/>
    </location>
</feature>
<feature type="repeat" description="PPR 10">
    <location>
        <begin position="350"/>
        <end position="384"/>
    </location>
</feature>
<feature type="repeat" description="PPR 11">
    <location>
        <begin position="385"/>
        <end position="419"/>
    </location>
</feature>
<feature type="region of interest" description="Type E motif">
    <location>
        <begin position="420"/>
        <end position="495"/>
    </location>
</feature>
<feature type="region of interest" description="Type E(+) motif">
    <location>
        <begin position="496"/>
        <end position="526"/>
    </location>
</feature>
<feature type="region of interest" description="Type DYW motif">
    <location>
        <begin position="527"/>
        <end position="623"/>
    </location>
</feature>
<keyword id="KW-0496">Mitochondrion</keyword>
<keyword id="KW-1185">Reference proteome</keyword>
<keyword id="KW-0677">Repeat</keyword>
<keyword id="KW-0809">Transit peptide</keyword>
<protein>
    <recommendedName>
        <fullName>Pentatricopeptide repeat-containing protein At5g15340, mitochondrial</fullName>
    </recommendedName>
</protein>
<comment type="subcellular location">
    <subcellularLocation>
        <location evidence="2">Mitochondrion</location>
    </subcellularLocation>
</comment>
<comment type="similarity">
    <text evidence="2">Belongs to the PPR family. PCMP-H subfamily.</text>
</comment>
<comment type="online information" name="Pentatricopeptide repeat proteins">
    <link uri="https://ppr.plantenergy.uwa.edu.au"/>
</comment>
<dbReference type="EMBL" id="AL353993">
    <property type="protein sequence ID" value="CAB89344.1"/>
    <property type="molecule type" value="Genomic_DNA"/>
</dbReference>
<dbReference type="EMBL" id="CP002688">
    <property type="protein sequence ID" value="AED92151.1"/>
    <property type="molecule type" value="Genomic_DNA"/>
</dbReference>
<dbReference type="PIR" id="T49969">
    <property type="entry name" value="T49969"/>
</dbReference>
<dbReference type="RefSeq" id="NP_197038.1">
    <property type="nucleotide sequence ID" value="NM_121538.2"/>
</dbReference>
<dbReference type="SMR" id="Q9LXE8"/>
<dbReference type="FunCoup" id="Q9LXE8">
    <property type="interactions" value="1"/>
</dbReference>
<dbReference type="STRING" id="3702.Q9LXE8"/>
<dbReference type="PaxDb" id="3702-AT5G15340.1"/>
<dbReference type="ProteomicsDB" id="249267"/>
<dbReference type="EnsemblPlants" id="AT5G15340.1">
    <property type="protein sequence ID" value="AT5G15340.1"/>
    <property type="gene ID" value="AT5G15340"/>
</dbReference>
<dbReference type="GeneID" id="831386"/>
<dbReference type="Gramene" id="AT5G15340.1">
    <property type="protein sequence ID" value="AT5G15340.1"/>
    <property type="gene ID" value="AT5G15340"/>
</dbReference>
<dbReference type="KEGG" id="ath:AT5G15340"/>
<dbReference type="Araport" id="AT5G15340"/>
<dbReference type="TAIR" id="AT5G15340"/>
<dbReference type="eggNOG" id="KOG4197">
    <property type="taxonomic scope" value="Eukaryota"/>
</dbReference>
<dbReference type="HOGENOM" id="CLU_002706_0_1_1"/>
<dbReference type="InParanoid" id="Q9LXE8"/>
<dbReference type="OMA" id="EMVFGCG"/>
<dbReference type="PhylomeDB" id="Q9LXE8"/>
<dbReference type="PRO" id="PR:Q9LXE8"/>
<dbReference type="Proteomes" id="UP000006548">
    <property type="component" value="Chromosome 5"/>
</dbReference>
<dbReference type="ExpressionAtlas" id="Q9LXE8">
    <property type="expression patterns" value="baseline and differential"/>
</dbReference>
<dbReference type="GO" id="GO:0005739">
    <property type="term" value="C:mitochondrion"/>
    <property type="evidence" value="ECO:0007669"/>
    <property type="project" value="UniProtKB-SubCell"/>
</dbReference>
<dbReference type="GO" id="GO:0003723">
    <property type="term" value="F:RNA binding"/>
    <property type="evidence" value="ECO:0007669"/>
    <property type="project" value="InterPro"/>
</dbReference>
<dbReference type="GO" id="GO:0008270">
    <property type="term" value="F:zinc ion binding"/>
    <property type="evidence" value="ECO:0007669"/>
    <property type="project" value="InterPro"/>
</dbReference>
<dbReference type="GO" id="GO:0009451">
    <property type="term" value="P:RNA modification"/>
    <property type="evidence" value="ECO:0007669"/>
    <property type="project" value="InterPro"/>
</dbReference>
<dbReference type="FunFam" id="1.25.40.10:FF:001767">
    <property type="entry name" value="Pentatricopeptide repeat-containing protein At5g15340, mitochondrial"/>
    <property type="match status" value="1"/>
</dbReference>
<dbReference type="FunFam" id="1.25.40.10:FF:001087">
    <property type="entry name" value="Pentatricopeptide repeat-containing protein, mitochondrial"/>
    <property type="match status" value="1"/>
</dbReference>
<dbReference type="Gene3D" id="1.25.40.10">
    <property type="entry name" value="Tetratricopeptide repeat domain"/>
    <property type="match status" value="4"/>
</dbReference>
<dbReference type="InterPro" id="IPR032867">
    <property type="entry name" value="DYW_dom"/>
</dbReference>
<dbReference type="InterPro" id="IPR046848">
    <property type="entry name" value="E_motif"/>
</dbReference>
<dbReference type="InterPro" id="IPR046849">
    <property type="entry name" value="Eplus_motif"/>
</dbReference>
<dbReference type="InterPro" id="IPR002885">
    <property type="entry name" value="Pentatricopeptide_rpt"/>
</dbReference>
<dbReference type="InterPro" id="IPR046960">
    <property type="entry name" value="PPR_At4g14850-like_plant"/>
</dbReference>
<dbReference type="InterPro" id="IPR011990">
    <property type="entry name" value="TPR-like_helical_dom_sf"/>
</dbReference>
<dbReference type="NCBIfam" id="TIGR00756">
    <property type="entry name" value="PPR"/>
    <property type="match status" value="2"/>
</dbReference>
<dbReference type="PANTHER" id="PTHR47926">
    <property type="entry name" value="PENTATRICOPEPTIDE REPEAT-CONTAINING PROTEIN"/>
    <property type="match status" value="1"/>
</dbReference>
<dbReference type="PANTHER" id="PTHR47926:SF347">
    <property type="entry name" value="PENTATRICOPEPTIDE REPEAT-CONTAINING PROTEIN"/>
    <property type="match status" value="1"/>
</dbReference>
<dbReference type="Pfam" id="PF14432">
    <property type="entry name" value="DYW_deaminase"/>
    <property type="match status" value="1"/>
</dbReference>
<dbReference type="Pfam" id="PF20431">
    <property type="entry name" value="E_motif"/>
    <property type="match status" value="1"/>
</dbReference>
<dbReference type="Pfam" id="PF20430">
    <property type="entry name" value="Eplus_motif"/>
    <property type="match status" value="1"/>
</dbReference>
<dbReference type="Pfam" id="PF01535">
    <property type="entry name" value="PPR"/>
    <property type="match status" value="4"/>
</dbReference>
<dbReference type="Pfam" id="PF13041">
    <property type="entry name" value="PPR_2"/>
    <property type="match status" value="1"/>
</dbReference>
<dbReference type="PROSITE" id="PS51375">
    <property type="entry name" value="PPR"/>
    <property type="match status" value="9"/>
</dbReference>
<proteinExistence type="evidence at transcript level"/>
<accession>Q9LXE8</accession>